<feature type="chain" id="PRO_1000189553" description="Ribulokinase">
    <location>
        <begin position="1"/>
        <end position="566"/>
    </location>
</feature>
<gene>
    <name evidence="1" type="primary">araB</name>
    <name type="ordered locus">E2348C_0064</name>
</gene>
<sequence length="566" mass="61237">MAIAIGLDFGSDSVRALAVDCATGEEIATSVEWYPRWQNGQFCDAPNNQFRHHPRDYIESMEAALKTVLAELSVEQRAAVVGIGVDTTGSTPAPIDADGNVLALRPEFAENPNAMFVLWKDHTAVEEAEEITRLCHTPGNVDYSRYIGGIYSSEWFWAKILHVTRQDNAVAQSAASWIELCDWVPALLSGTTRPQDIRRGRCSAGHKSLWHESWGGLPPASFFDELDPILNRHLPSPLFTETWTADIPVGTLCPEWAQRLGLPESVVISGGAFDCHMGAVGAGAQPNALVKVIGTSTCDILIADKQSVGERAVKGICGQVDGSVVPGFIGLEAGQSAFGDIYAWFGRVLGWPLEQLAAQHPELKEQINASQKQLLPALTEAWAKNPSLDHLPVVLDWFNGRRTPNANQRLKGVITDLNLATDAPLLFGGLIAATAFGARAIMECFTAQGIAVNNVMALGGIARKNQVIMQACCDVLNRPLQIVASDQCCALGAAIFAAVAAKVHADIPSAQQKMASAVEKTLQPRSEQAQRFEPLYRRYQQWAMSAEQHYLPTSAPAQADQAVPTL</sequence>
<proteinExistence type="inferred from homology"/>
<evidence type="ECO:0000255" key="1">
    <source>
        <dbReference type="HAMAP-Rule" id="MF_00520"/>
    </source>
</evidence>
<reference key="1">
    <citation type="journal article" date="2009" name="J. Bacteriol.">
        <title>Complete genome sequence and comparative genome analysis of enteropathogenic Escherichia coli O127:H6 strain E2348/69.</title>
        <authorList>
            <person name="Iguchi A."/>
            <person name="Thomson N.R."/>
            <person name="Ogura Y."/>
            <person name="Saunders D."/>
            <person name="Ooka T."/>
            <person name="Henderson I.R."/>
            <person name="Harris D."/>
            <person name="Asadulghani M."/>
            <person name="Kurokawa K."/>
            <person name="Dean P."/>
            <person name="Kenny B."/>
            <person name="Quail M.A."/>
            <person name="Thurston S."/>
            <person name="Dougan G."/>
            <person name="Hayashi T."/>
            <person name="Parkhill J."/>
            <person name="Frankel G."/>
        </authorList>
    </citation>
    <scope>NUCLEOTIDE SEQUENCE [LARGE SCALE GENOMIC DNA]</scope>
    <source>
        <strain>E2348/69 / EPEC</strain>
    </source>
</reference>
<organism>
    <name type="scientific">Escherichia coli O127:H6 (strain E2348/69 / EPEC)</name>
    <dbReference type="NCBI Taxonomy" id="574521"/>
    <lineage>
        <taxon>Bacteria</taxon>
        <taxon>Pseudomonadati</taxon>
        <taxon>Pseudomonadota</taxon>
        <taxon>Gammaproteobacteria</taxon>
        <taxon>Enterobacterales</taxon>
        <taxon>Enterobacteriaceae</taxon>
        <taxon>Escherichia</taxon>
    </lineage>
</organism>
<comment type="catalytic activity">
    <reaction evidence="1">
        <text>D-ribulose + ATP = D-ribulose 5-phosphate + ADP + H(+)</text>
        <dbReference type="Rhea" id="RHEA:17601"/>
        <dbReference type="ChEBI" id="CHEBI:15378"/>
        <dbReference type="ChEBI" id="CHEBI:17173"/>
        <dbReference type="ChEBI" id="CHEBI:30616"/>
        <dbReference type="ChEBI" id="CHEBI:58121"/>
        <dbReference type="ChEBI" id="CHEBI:456216"/>
        <dbReference type="EC" id="2.7.1.16"/>
    </reaction>
</comment>
<comment type="catalytic activity">
    <reaction evidence="1">
        <text>L-ribulose + ATP = L-ribulose 5-phosphate + ADP + H(+)</text>
        <dbReference type="Rhea" id="RHEA:22072"/>
        <dbReference type="ChEBI" id="CHEBI:15378"/>
        <dbReference type="ChEBI" id="CHEBI:16880"/>
        <dbReference type="ChEBI" id="CHEBI:30616"/>
        <dbReference type="ChEBI" id="CHEBI:58226"/>
        <dbReference type="ChEBI" id="CHEBI:456216"/>
        <dbReference type="EC" id="2.7.1.16"/>
    </reaction>
</comment>
<comment type="pathway">
    <text evidence="1">Carbohydrate degradation; L-arabinose degradation via L-ribulose; D-xylulose 5-phosphate from L-arabinose (bacterial route): step 2/3.</text>
</comment>
<comment type="similarity">
    <text evidence="1">Belongs to the ribulokinase family.</text>
</comment>
<protein>
    <recommendedName>
        <fullName evidence="1">Ribulokinase</fullName>
        <ecNumber evidence="1">2.7.1.16</ecNumber>
    </recommendedName>
</protein>
<accession>B7UIA9</accession>
<name>ARAB_ECO27</name>
<keyword id="KW-0054">Arabinose catabolism</keyword>
<keyword id="KW-0067">ATP-binding</keyword>
<keyword id="KW-0119">Carbohydrate metabolism</keyword>
<keyword id="KW-0418">Kinase</keyword>
<keyword id="KW-0547">Nucleotide-binding</keyword>
<keyword id="KW-1185">Reference proteome</keyword>
<keyword id="KW-0808">Transferase</keyword>
<dbReference type="EC" id="2.7.1.16" evidence="1"/>
<dbReference type="EMBL" id="FM180568">
    <property type="protein sequence ID" value="CAS07612.1"/>
    <property type="molecule type" value="Genomic_DNA"/>
</dbReference>
<dbReference type="RefSeq" id="WP_000951866.1">
    <property type="nucleotide sequence ID" value="NC_011601.1"/>
</dbReference>
<dbReference type="SMR" id="B7UIA9"/>
<dbReference type="KEGG" id="ecg:E2348C_0064"/>
<dbReference type="HOGENOM" id="CLU_009281_9_1_6"/>
<dbReference type="UniPathway" id="UPA00145">
    <property type="reaction ID" value="UER00566"/>
</dbReference>
<dbReference type="Proteomes" id="UP000008205">
    <property type="component" value="Chromosome"/>
</dbReference>
<dbReference type="GO" id="GO:0005737">
    <property type="term" value="C:cytoplasm"/>
    <property type="evidence" value="ECO:0007669"/>
    <property type="project" value="TreeGrafter"/>
</dbReference>
<dbReference type="GO" id="GO:0005524">
    <property type="term" value="F:ATP binding"/>
    <property type="evidence" value="ECO:0007669"/>
    <property type="project" value="UniProtKB-KW"/>
</dbReference>
<dbReference type="GO" id="GO:0019150">
    <property type="term" value="F:D-ribulokinase activity"/>
    <property type="evidence" value="ECO:0007669"/>
    <property type="project" value="TreeGrafter"/>
</dbReference>
<dbReference type="GO" id="GO:0008741">
    <property type="term" value="F:ribulokinase activity"/>
    <property type="evidence" value="ECO:0007669"/>
    <property type="project" value="UniProtKB-UniRule"/>
</dbReference>
<dbReference type="GO" id="GO:0019569">
    <property type="term" value="P:L-arabinose catabolic process to xylulose 5-phosphate"/>
    <property type="evidence" value="ECO:0007669"/>
    <property type="project" value="UniProtKB-UniRule"/>
</dbReference>
<dbReference type="CDD" id="cd07781">
    <property type="entry name" value="ASKHA_NBD_FGGY_L-RBK"/>
    <property type="match status" value="1"/>
</dbReference>
<dbReference type="Gene3D" id="1.20.58.2240">
    <property type="match status" value="1"/>
</dbReference>
<dbReference type="Gene3D" id="3.30.420.40">
    <property type="match status" value="1"/>
</dbReference>
<dbReference type="HAMAP" id="MF_00520">
    <property type="entry name" value="Ribulokinase"/>
    <property type="match status" value="1"/>
</dbReference>
<dbReference type="InterPro" id="IPR043129">
    <property type="entry name" value="ATPase_NBD"/>
</dbReference>
<dbReference type="InterPro" id="IPR018485">
    <property type="entry name" value="FGGY_C"/>
</dbReference>
<dbReference type="InterPro" id="IPR005929">
    <property type="entry name" value="Ribulokinase"/>
</dbReference>
<dbReference type="NCBIfam" id="TIGR01234">
    <property type="entry name" value="L-ribulokinase"/>
    <property type="match status" value="1"/>
</dbReference>
<dbReference type="NCBIfam" id="NF003154">
    <property type="entry name" value="PRK04123.1"/>
    <property type="match status" value="1"/>
</dbReference>
<dbReference type="PANTHER" id="PTHR43435:SF4">
    <property type="entry name" value="FGGY CARBOHYDRATE KINASE DOMAIN-CONTAINING PROTEIN"/>
    <property type="match status" value="1"/>
</dbReference>
<dbReference type="PANTHER" id="PTHR43435">
    <property type="entry name" value="RIBULOKINASE"/>
    <property type="match status" value="1"/>
</dbReference>
<dbReference type="Pfam" id="PF02782">
    <property type="entry name" value="FGGY_C"/>
    <property type="match status" value="1"/>
</dbReference>
<dbReference type="SUPFAM" id="SSF53067">
    <property type="entry name" value="Actin-like ATPase domain"/>
    <property type="match status" value="2"/>
</dbReference>